<protein>
    <recommendedName>
        <fullName evidence="2">Small ribosomal subunit protein uS12m</fullName>
    </recommendedName>
    <alternativeName>
        <fullName>Ribosomal protein S12, mitochondrial</fullName>
    </alternativeName>
</protein>
<sequence>MPTKNQLIRHGREEKRRTDRTRALDQCPQKQGVCLRVSTRTPKKPNSALRKIAKVRLSNRHDIFAYIPGEGHNLQEHSIVLVRGGRVKDLPGVKFHCIRGVKDLLGIPDRRKGRSKYGAERPKSK</sequence>
<feature type="chain" id="PRO_0000146440" description="Small ribosomal subunit protein uS12m">
    <location>
        <begin position="1"/>
        <end position="125"/>
    </location>
</feature>
<feature type="region of interest" description="Disordered" evidence="1">
    <location>
        <begin position="1"/>
        <end position="27"/>
    </location>
</feature>
<feature type="compositionally biased region" description="Basic and acidic residues" evidence="1">
    <location>
        <begin position="10"/>
        <end position="23"/>
    </location>
</feature>
<comment type="function">
    <text>Protein S12 is involved in the translation initiation step.</text>
</comment>
<comment type="subcellular location">
    <subcellularLocation>
        <location>Mitochondrion</location>
    </subcellularLocation>
</comment>
<comment type="RNA editing">
    <location>
        <position position="24"/>
    </location>
    <location>
        <position position="66"/>
    </location>
    <location>
        <position position="74"/>
    </location>
    <location>
        <position position="90"/>
    </location>
    <location>
        <position position="95"/>
    </location>
    <location>
        <position position="97"/>
    </location>
</comment>
<comment type="similarity">
    <text evidence="2">Belongs to the universal ribosomal protein uS12 family.</text>
</comment>
<dbReference type="EMBL" id="X14709">
    <property type="protein sequence ID" value="CAA32834.1"/>
    <property type="status" value="ALT_SEQ"/>
    <property type="molecule type" value="Genomic_DNA"/>
</dbReference>
<dbReference type="SMR" id="P60099"/>
<dbReference type="PaxDb" id="4577-GRMZM5G881135_P01"/>
<dbReference type="MaizeGDB" id="69570"/>
<dbReference type="eggNOG" id="KOG1750">
    <property type="taxonomic scope" value="Eukaryota"/>
</dbReference>
<dbReference type="OrthoDB" id="1875922at2759"/>
<dbReference type="GO" id="GO:0005739">
    <property type="term" value="C:mitochondrion"/>
    <property type="evidence" value="ECO:0007669"/>
    <property type="project" value="UniProtKB-SubCell"/>
</dbReference>
<dbReference type="GO" id="GO:0005840">
    <property type="term" value="C:ribosome"/>
    <property type="evidence" value="ECO:0000318"/>
    <property type="project" value="GO_Central"/>
</dbReference>
<dbReference type="GO" id="GO:0015935">
    <property type="term" value="C:small ribosomal subunit"/>
    <property type="evidence" value="ECO:0007669"/>
    <property type="project" value="InterPro"/>
</dbReference>
<dbReference type="GO" id="GO:0003735">
    <property type="term" value="F:structural constituent of ribosome"/>
    <property type="evidence" value="ECO:0000318"/>
    <property type="project" value="GO_Central"/>
</dbReference>
<dbReference type="GO" id="GO:0006412">
    <property type="term" value="P:translation"/>
    <property type="evidence" value="ECO:0000318"/>
    <property type="project" value="GO_Central"/>
</dbReference>
<dbReference type="CDD" id="cd03368">
    <property type="entry name" value="Ribosomal_S12"/>
    <property type="match status" value="1"/>
</dbReference>
<dbReference type="FunFam" id="2.40.50.140:FF:000099">
    <property type="entry name" value="Ribosomal protein S12, mitochondrial"/>
    <property type="match status" value="1"/>
</dbReference>
<dbReference type="Gene3D" id="2.40.50.140">
    <property type="entry name" value="Nucleic acid-binding proteins"/>
    <property type="match status" value="1"/>
</dbReference>
<dbReference type="HAMAP" id="MF_00403_B">
    <property type="entry name" value="Ribosomal_uS12_B"/>
    <property type="match status" value="1"/>
</dbReference>
<dbReference type="InterPro" id="IPR012340">
    <property type="entry name" value="NA-bd_OB-fold"/>
</dbReference>
<dbReference type="InterPro" id="IPR006032">
    <property type="entry name" value="Ribosomal_uS12"/>
</dbReference>
<dbReference type="InterPro" id="IPR005679">
    <property type="entry name" value="Ribosomal_uS12_bac"/>
</dbReference>
<dbReference type="NCBIfam" id="TIGR00981">
    <property type="entry name" value="rpsL_bact"/>
    <property type="match status" value="1"/>
</dbReference>
<dbReference type="PANTHER" id="PTHR11652">
    <property type="entry name" value="30S RIBOSOMAL PROTEIN S12 FAMILY MEMBER"/>
    <property type="match status" value="1"/>
</dbReference>
<dbReference type="Pfam" id="PF00164">
    <property type="entry name" value="Ribosom_S12_S23"/>
    <property type="match status" value="1"/>
</dbReference>
<dbReference type="PIRSF" id="PIRSF002133">
    <property type="entry name" value="Ribosomal_S12/S23"/>
    <property type="match status" value="1"/>
</dbReference>
<dbReference type="PRINTS" id="PR01034">
    <property type="entry name" value="RIBOSOMALS12"/>
</dbReference>
<dbReference type="SUPFAM" id="SSF50249">
    <property type="entry name" value="Nucleic acid-binding proteins"/>
    <property type="match status" value="1"/>
</dbReference>
<dbReference type="PROSITE" id="PS00055">
    <property type="entry name" value="RIBOSOMAL_S12"/>
    <property type="match status" value="1"/>
</dbReference>
<accession>P60099</accession>
<accession>P10851</accession>
<organism>
    <name type="scientific">Zea mays</name>
    <name type="common">Maize</name>
    <dbReference type="NCBI Taxonomy" id="4577"/>
    <lineage>
        <taxon>Eukaryota</taxon>
        <taxon>Viridiplantae</taxon>
        <taxon>Streptophyta</taxon>
        <taxon>Embryophyta</taxon>
        <taxon>Tracheophyta</taxon>
        <taxon>Spermatophyta</taxon>
        <taxon>Magnoliopsida</taxon>
        <taxon>Liliopsida</taxon>
        <taxon>Poales</taxon>
        <taxon>Poaceae</taxon>
        <taxon>PACMAD clade</taxon>
        <taxon>Panicoideae</taxon>
        <taxon>Andropogonodae</taxon>
        <taxon>Andropogoneae</taxon>
        <taxon>Tripsacinae</taxon>
        <taxon>Zea</taxon>
    </lineage>
</organism>
<geneLocation type="mitochondrion"/>
<evidence type="ECO:0000256" key="1">
    <source>
        <dbReference type="SAM" id="MobiDB-lite"/>
    </source>
</evidence>
<evidence type="ECO:0000305" key="2"/>
<proteinExistence type="evidence at transcript level"/>
<reference key="1">
    <citation type="journal article" date="1988" name="Mol. Gen. Genet.">
        <title>The genes coding for subunit 3 of NADH dehydrogenase and for ribosomal protein S12 are present in the wheat and maize mitochondrial genomes and are co-transcribed.</title>
        <authorList>
            <person name="Gualberto J.M."/>
            <person name="Wintz H."/>
            <person name="Weil J.-H."/>
            <person name="Grienenberger J.-M."/>
        </authorList>
    </citation>
    <scope>NUCLEOTIDE SEQUENCE [GENOMIC DNA]</scope>
    <source>
        <strain>WF9-N</strain>
        <tissue>Hypocotyl</tissue>
    </source>
</reference>
<name>RT12_MAIZE</name>
<gene>
    <name type="primary">RPS12</name>
</gene>
<keyword id="KW-0496">Mitochondrion</keyword>
<keyword id="KW-0687">Ribonucleoprotein</keyword>
<keyword id="KW-0689">Ribosomal protein</keyword>
<keyword id="KW-0691">RNA editing</keyword>